<organism>
    <name type="scientific">Saccharomyces cerevisiae (strain Lalvin EC1118 / Prise de mousse)</name>
    <name type="common">Baker's yeast</name>
    <dbReference type="NCBI Taxonomy" id="643680"/>
    <lineage>
        <taxon>Eukaryota</taxon>
        <taxon>Fungi</taxon>
        <taxon>Dikarya</taxon>
        <taxon>Ascomycota</taxon>
        <taxon>Saccharomycotina</taxon>
        <taxon>Saccharomycetes</taxon>
        <taxon>Saccharomycetales</taxon>
        <taxon>Saccharomycetaceae</taxon>
        <taxon>Saccharomyces</taxon>
    </lineage>
</organism>
<keyword id="KW-0496">Mitochondrion</keyword>
<keyword id="KW-0809">Transit peptide</keyword>
<proteinExistence type="inferred from homology"/>
<evidence type="ECO:0000250" key="1"/>
<evidence type="ECO:0000255" key="2"/>
<evidence type="ECO:0000305" key="3"/>
<sequence length="310" mass="34113">MRLISKVLVKTNCLEVGMRRAPQWYSHYSTTAGNARVNKKGSKVVPVLTGLALASIFAKKWYDDSQIKKADATSVAVDASISAFPKKMGPPQWPFSTQYELIGKGVRCVSSITFKAYGLGIYVAAEDKHLVSEVLDSKFLSQAFIDTAAPPSPENSHQDNLRAALNDPAKAPILINNLLDSGIRLMSKNTPIKAGSFKLLMDGTKKSVLKNPDSQSQDKDRLEAGFQELHDCFRSVKGLVARDDDFFIELNKDCSMNLSYYARKKDEFVILGTVKEPLIGKLLFAHYLAAVDPPSPEARKEVIDALVSLS</sequence>
<reference key="1">
    <citation type="journal article" date="2009" name="Proc. Natl. Acad. Sci. U.S.A.">
        <title>Eukaryote-to-eukaryote gene transfer events revealed by the genome sequence of the wine yeast Saccharomyces cerevisiae EC1118.</title>
        <authorList>
            <person name="Novo M."/>
            <person name="Bigey F."/>
            <person name="Beyne E."/>
            <person name="Galeote V."/>
            <person name="Gavory F."/>
            <person name="Mallet S."/>
            <person name="Cambon B."/>
            <person name="Legras J.-L."/>
            <person name="Wincker P."/>
            <person name="Casaregola S."/>
            <person name="Dequin S."/>
        </authorList>
    </citation>
    <scope>NUCLEOTIDE SEQUENCE [LARGE SCALE GENOMIC DNA]</scope>
    <source>
        <strain>Lalvin EC1118 / Prise de mousse</strain>
    </source>
</reference>
<feature type="transit peptide" description="Mitochondrion" evidence="2">
    <location>
        <begin position="1"/>
        <end position="20"/>
    </location>
</feature>
<feature type="chain" id="PRO_0000399565" description="Altered inheritance of mitochondria protein 46, mitochondrial">
    <location>
        <begin position="21"/>
        <end position="310"/>
    </location>
</feature>
<accession>C8Z9Z9</accession>
<comment type="subcellular location">
    <subcellularLocation>
        <location evidence="1">Mitochondrion</location>
    </subcellularLocation>
</comment>
<comment type="similarity">
    <text evidence="3">Belongs to the AIM18/AIM46 family.</text>
</comment>
<name>AIM46_YEAS8</name>
<dbReference type="EMBL" id="FN393071">
    <property type="protein sequence ID" value="CAY80215.1"/>
    <property type="molecule type" value="Genomic_DNA"/>
</dbReference>
<dbReference type="SMR" id="C8Z9Z9"/>
<dbReference type="HOGENOM" id="CLU_038840_0_1_1"/>
<dbReference type="OrthoDB" id="11535at4893"/>
<dbReference type="Proteomes" id="UP000000286">
    <property type="component" value="Chromosome VIII, Scaffold EC1118_1H13"/>
</dbReference>
<dbReference type="GO" id="GO:0005739">
    <property type="term" value="C:mitochondrion"/>
    <property type="evidence" value="ECO:0007669"/>
    <property type="project" value="UniProtKB-SubCell"/>
</dbReference>
<dbReference type="GO" id="GO:0016872">
    <property type="term" value="F:intramolecular lyase activity"/>
    <property type="evidence" value="ECO:0007669"/>
    <property type="project" value="InterPro"/>
</dbReference>
<dbReference type="Gene3D" id="3.50.70.10">
    <property type="match status" value="1"/>
</dbReference>
<dbReference type="InterPro" id="IPR016087">
    <property type="entry name" value="Chalcone_isomerase"/>
</dbReference>
<dbReference type="InterPro" id="IPR016088">
    <property type="entry name" value="Chalcone_isomerase_3-sand"/>
</dbReference>
<dbReference type="InterPro" id="IPR036298">
    <property type="entry name" value="Chalcone_isomerase_sf"/>
</dbReference>
<dbReference type="Pfam" id="PF16035">
    <property type="entry name" value="Chalcone_2"/>
    <property type="match status" value="1"/>
</dbReference>
<dbReference type="SUPFAM" id="SSF54626">
    <property type="entry name" value="Chalcone isomerase"/>
    <property type="match status" value="1"/>
</dbReference>
<protein>
    <recommendedName>
        <fullName>Altered inheritance of mitochondria protein 46, mitochondrial</fullName>
    </recommendedName>
</protein>
<gene>
    <name type="primary">AIM46</name>
    <name type="synonym">FMP34</name>
    <name type="ORF">EC1118_1H13_1871g</name>
</gene>